<accession>A9IIH2</accession>
<reference key="1">
    <citation type="journal article" date="2008" name="BMC Genomics">
        <title>The missing link: Bordetella petrii is endowed with both the metabolic versatility of environmental bacteria and virulence traits of pathogenic Bordetellae.</title>
        <authorList>
            <person name="Gross R."/>
            <person name="Guzman C.A."/>
            <person name="Sebaihia M."/>
            <person name="Martin dos Santos V.A.P."/>
            <person name="Pieper D.H."/>
            <person name="Koebnik R."/>
            <person name="Lechner M."/>
            <person name="Bartels D."/>
            <person name="Buhrmester J."/>
            <person name="Choudhuri J.V."/>
            <person name="Ebensen T."/>
            <person name="Gaigalat L."/>
            <person name="Herrmann S."/>
            <person name="Khachane A.N."/>
            <person name="Larisch C."/>
            <person name="Link S."/>
            <person name="Linke B."/>
            <person name="Meyer F."/>
            <person name="Mormann S."/>
            <person name="Nakunst D."/>
            <person name="Rueckert C."/>
            <person name="Schneiker-Bekel S."/>
            <person name="Schulze K."/>
            <person name="Voerholter F.-J."/>
            <person name="Yevsa T."/>
            <person name="Engle J.T."/>
            <person name="Goldman W.E."/>
            <person name="Puehler A."/>
            <person name="Goebel U.B."/>
            <person name="Goesmann A."/>
            <person name="Bloecker H."/>
            <person name="Kaiser O."/>
            <person name="Martinez-Arias R."/>
        </authorList>
    </citation>
    <scope>NUCLEOTIDE SEQUENCE [LARGE SCALE GENOMIC DNA]</scope>
    <source>
        <strain>ATCC BAA-461 / DSM 12804 / CCUG 43448</strain>
    </source>
</reference>
<name>PLSX_BORPD</name>
<keyword id="KW-0963">Cytoplasm</keyword>
<keyword id="KW-0444">Lipid biosynthesis</keyword>
<keyword id="KW-0443">Lipid metabolism</keyword>
<keyword id="KW-0594">Phospholipid biosynthesis</keyword>
<keyword id="KW-1208">Phospholipid metabolism</keyword>
<keyword id="KW-0808">Transferase</keyword>
<organism>
    <name type="scientific">Bordetella petrii (strain ATCC BAA-461 / DSM 12804 / CCUG 43448)</name>
    <dbReference type="NCBI Taxonomy" id="340100"/>
    <lineage>
        <taxon>Bacteria</taxon>
        <taxon>Pseudomonadati</taxon>
        <taxon>Pseudomonadota</taxon>
        <taxon>Betaproteobacteria</taxon>
        <taxon>Burkholderiales</taxon>
        <taxon>Alcaligenaceae</taxon>
        <taxon>Bordetella</taxon>
    </lineage>
</organism>
<comment type="function">
    <text evidence="1">Catalyzes the reversible formation of acyl-phosphate (acyl-PO(4)) from acyl-[acyl-carrier-protein] (acyl-ACP). This enzyme utilizes acyl-ACP as fatty acyl donor, but not acyl-CoA.</text>
</comment>
<comment type="catalytic activity">
    <reaction evidence="1">
        <text>a fatty acyl-[ACP] + phosphate = an acyl phosphate + holo-[ACP]</text>
        <dbReference type="Rhea" id="RHEA:42292"/>
        <dbReference type="Rhea" id="RHEA-COMP:9685"/>
        <dbReference type="Rhea" id="RHEA-COMP:14125"/>
        <dbReference type="ChEBI" id="CHEBI:43474"/>
        <dbReference type="ChEBI" id="CHEBI:59918"/>
        <dbReference type="ChEBI" id="CHEBI:64479"/>
        <dbReference type="ChEBI" id="CHEBI:138651"/>
        <dbReference type="EC" id="2.3.1.274"/>
    </reaction>
</comment>
<comment type="pathway">
    <text evidence="1">Lipid metabolism; phospholipid metabolism.</text>
</comment>
<comment type="subunit">
    <text evidence="1">Homodimer. Probably interacts with PlsY.</text>
</comment>
<comment type="subcellular location">
    <subcellularLocation>
        <location evidence="1">Cytoplasm</location>
    </subcellularLocation>
    <text evidence="1">Associated with the membrane possibly through PlsY.</text>
</comment>
<comment type="similarity">
    <text evidence="1">Belongs to the PlsX family.</text>
</comment>
<dbReference type="EC" id="2.3.1.274" evidence="1"/>
<dbReference type="EMBL" id="AM902716">
    <property type="protein sequence ID" value="CAP42091.1"/>
    <property type="molecule type" value="Genomic_DNA"/>
</dbReference>
<dbReference type="SMR" id="A9IIH2"/>
<dbReference type="STRING" id="94624.Bpet1752"/>
<dbReference type="KEGG" id="bpt:Bpet1752"/>
<dbReference type="eggNOG" id="COG0416">
    <property type="taxonomic scope" value="Bacteria"/>
</dbReference>
<dbReference type="UniPathway" id="UPA00085"/>
<dbReference type="Proteomes" id="UP000001225">
    <property type="component" value="Chromosome"/>
</dbReference>
<dbReference type="GO" id="GO:0005737">
    <property type="term" value="C:cytoplasm"/>
    <property type="evidence" value="ECO:0007669"/>
    <property type="project" value="UniProtKB-SubCell"/>
</dbReference>
<dbReference type="GO" id="GO:0043811">
    <property type="term" value="F:phosphate:acyl-[acyl carrier protein] acyltransferase activity"/>
    <property type="evidence" value="ECO:0007669"/>
    <property type="project" value="UniProtKB-UniRule"/>
</dbReference>
<dbReference type="GO" id="GO:0006633">
    <property type="term" value="P:fatty acid biosynthetic process"/>
    <property type="evidence" value="ECO:0007669"/>
    <property type="project" value="UniProtKB-UniRule"/>
</dbReference>
<dbReference type="GO" id="GO:0008654">
    <property type="term" value="P:phospholipid biosynthetic process"/>
    <property type="evidence" value="ECO:0007669"/>
    <property type="project" value="UniProtKB-KW"/>
</dbReference>
<dbReference type="Gene3D" id="3.40.718.10">
    <property type="entry name" value="Isopropylmalate Dehydrogenase"/>
    <property type="match status" value="1"/>
</dbReference>
<dbReference type="HAMAP" id="MF_00019">
    <property type="entry name" value="PlsX"/>
    <property type="match status" value="1"/>
</dbReference>
<dbReference type="InterPro" id="IPR003664">
    <property type="entry name" value="FA_synthesis"/>
</dbReference>
<dbReference type="InterPro" id="IPR012281">
    <property type="entry name" value="Phospholipid_synth_PlsX-like"/>
</dbReference>
<dbReference type="NCBIfam" id="TIGR00182">
    <property type="entry name" value="plsX"/>
    <property type="match status" value="1"/>
</dbReference>
<dbReference type="PANTHER" id="PTHR30100">
    <property type="entry name" value="FATTY ACID/PHOSPHOLIPID SYNTHESIS PROTEIN PLSX"/>
    <property type="match status" value="1"/>
</dbReference>
<dbReference type="PANTHER" id="PTHR30100:SF1">
    <property type="entry name" value="PHOSPHATE ACYLTRANSFERASE"/>
    <property type="match status" value="1"/>
</dbReference>
<dbReference type="Pfam" id="PF02504">
    <property type="entry name" value="FA_synthesis"/>
    <property type="match status" value="1"/>
</dbReference>
<dbReference type="PIRSF" id="PIRSF002465">
    <property type="entry name" value="Phsphlp_syn_PlsX"/>
    <property type="match status" value="1"/>
</dbReference>
<dbReference type="SUPFAM" id="SSF53659">
    <property type="entry name" value="Isocitrate/Isopropylmalate dehydrogenase-like"/>
    <property type="match status" value="1"/>
</dbReference>
<gene>
    <name evidence="1" type="primary">plsX</name>
    <name type="ordered locus">Bpet1752</name>
</gene>
<evidence type="ECO:0000255" key="1">
    <source>
        <dbReference type="HAMAP-Rule" id="MF_00019"/>
    </source>
</evidence>
<sequence length="354" mass="37874">MIRIAIDCMGGDFGLPVTIPAAIEFARQFPDSRLLLVGLPEAIEAALAEHKAAPRDRFEIVPATEVVSMDDPVEIALRRKKDSSMRLAAQAVKDGRADACVSAGNTGAWMAISRYVLKTLDGIDRPAIATSIPNQTGRATTVLDLGANVDCTAEHLLQFAIMGTALTQAVDHRDNPTVGLLNIGEEVIKGNEVVKEAAELLRRSPLNFRGNVEGNDIFKGTVDVVVCDGFVGNVVLKSVEGLAKMLSSVIREEFQRNLVTLLAGAIAKPVLNRLRNRVDNRRYNGAALLGLRGVVIKSHGSADVYAYGFALQRAREAVVSKLQERTAQAVALITQRVQMGEAAAGEPEAAGDTV</sequence>
<proteinExistence type="inferred from homology"/>
<protein>
    <recommendedName>
        <fullName evidence="1">Phosphate acyltransferase</fullName>
        <ecNumber evidence="1">2.3.1.274</ecNumber>
    </recommendedName>
    <alternativeName>
        <fullName evidence="1">Acyl-ACP phosphotransacylase</fullName>
    </alternativeName>
    <alternativeName>
        <fullName evidence="1">Acyl-[acyl-carrier-protein]--phosphate acyltransferase</fullName>
    </alternativeName>
    <alternativeName>
        <fullName evidence="1">Phosphate-acyl-ACP acyltransferase</fullName>
    </alternativeName>
</protein>
<feature type="chain" id="PRO_1000089880" description="Phosphate acyltransferase">
    <location>
        <begin position="1"/>
        <end position="354"/>
    </location>
</feature>